<keyword id="KW-0997">Cell inner membrane</keyword>
<keyword id="KW-1003">Cell membrane</keyword>
<keyword id="KW-0406">Ion transport</keyword>
<keyword id="KW-0472">Membrane</keyword>
<keyword id="KW-0630">Potassium</keyword>
<keyword id="KW-0633">Potassium transport</keyword>
<keyword id="KW-0769">Symport</keyword>
<keyword id="KW-0812">Transmembrane</keyword>
<keyword id="KW-1133">Transmembrane helix</keyword>
<keyword id="KW-0813">Transport</keyword>
<organism>
    <name type="scientific">Vibrio cholerae serotype O1 (strain ATCC 39541 / Classical Ogawa 395 / O395)</name>
    <dbReference type="NCBI Taxonomy" id="345073"/>
    <lineage>
        <taxon>Bacteria</taxon>
        <taxon>Pseudomonadati</taxon>
        <taxon>Pseudomonadota</taxon>
        <taxon>Gammaproteobacteria</taxon>
        <taxon>Vibrionales</taxon>
        <taxon>Vibrionaceae</taxon>
        <taxon>Vibrio</taxon>
    </lineage>
</organism>
<reference key="1">
    <citation type="submission" date="2007-03" db="EMBL/GenBank/DDBJ databases">
        <authorList>
            <person name="Heidelberg J."/>
        </authorList>
    </citation>
    <scope>NUCLEOTIDE SEQUENCE [LARGE SCALE GENOMIC DNA]</scope>
    <source>
        <strain>ATCC 39541 / Classical Ogawa 395 / O395</strain>
    </source>
</reference>
<reference key="2">
    <citation type="journal article" date="2008" name="PLoS ONE">
        <title>A recalibrated molecular clock and independent origins for the cholera pandemic clones.</title>
        <authorList>
            <person name="Feng L."/>
            <person name="Reeves P.R."/>
            <person name="Lan R."/>
            <person name="Ren Y."/>
            <person name="Gao C."/>
            <person name="Zhou Z."/>
            <person name="Ren Y."/>
            <person name="Cheng J."/>
            <person name="Wang W."/>
            <person name="Wang J."/>
            <person name="Qian W."/>
            <person name="Li D."/>
            <person name="Wang L."/>
        </authorList>
    </citation>
    <scope>NUCLEOTIDE SEQUENCE [LARGE SCALE GENOMIC DNA]</scope>
    <source>
        <strain>ATCC 39541 / Classical Ogawa 395 / O395</strain>
    </source>
</reference>
<gene>
    <name evidence="1" type="primary">kup</name>
    <name type="ordered locus">VC0395_0462</name>
    <name type="ordered locus">VC395_A0795</name>
</gene>
<comment type="function">
    <text evidence="1">Transport of potassium into the cell. Likely operates as a K(+):H(+) symporter.</text>
</comment>
<comment type="catalytic activity">
    <reaction evidence="1">
        <text>K(+)(in) + H(+)(in) = K(+)(out) + H(+)(out)</text>
        <dbReference type="Rhea" id="RHEA:28490"/>
        <dbReference type="ChEBI" id="CHEBI:15378"/>
        <dbReference type="ChEBI" id="CHEBI:29103"/>
    </reaction>
    <physiologicalReaction direction="right-to-left" evidence="1">
        <dbReference type="Rhea" id="RHEA:28492"/>
    </physiologicalReaction>
</comment>
<comment type="subcellular location">
    <subcellularLocation>
        <location evidence="1">Cell inner membrane</location>
        <topology evidence="1">Multi-pass membrane protein</topology>
    </subcellularLocation>
</comment>
<comment type="similarity">
    <text evidence="1">Belongs to the HAK/KUP transporter (TC 2.A.72) family.</text>
</comment>
<feature type="chain" id="PRO_1000087562" description="Probable potassium transport system protein Kup">
    <location>
        <begin position="1"/>
        <end position="620"/>
    </location>
</feature>
<feature type="transmembrane region" description="Helical" evidence="1">
    <location>
        <begin position="11"/>
        <end position="31"/>
    </location>
</feature>
<feature type="transmembrane region" description="Helical" evidence="1">
    <location>
        <begin position="51"/>
        <end position="71"/>
    </location>
</feature>
<feature type="transmembrane region" description="Helical" evidence="1">
    <location>
        <begin position="100"/>
        <end position="120"/>
    </location>
</feature>
<feature type="transmembrane region" description="Helical" evidence="1">
    <location>
        <begin position="138"/>
        <end position="158"/>
    </location>
</feature>
<feature type="transmembrane region" description="Helical" evidence="1">
    <location>
        <begin position="167"/>
        <end position="187"/>
    </location>
</feature>
<feature type="transmembrane region" description="Helical" evidence="1">
    <location>
        <begin position="202"/>
        <end position="222"/>
    </location>
</feature>
<feature type="transmembrane region" description="Helical" evidence="1">
    <location>
        <begin position="246"/>
        <end position="266"/>
    </location>
</feature>
<feature type="transmembrane region" description="Helical" evidence="1">
    <location>
        <begin position="288"/>
        <end position="308"/>
    </location>
</feature>
<feature type="transmembrane region" description="Helical" evidence="1">
    <location>
        <begin position="334"/>
        <end position="354"/>
    </location>
</feature>
<feature type="transmembrane region" description="Helical" evidence="1">
    <location>
        <begin position="364"/>
        <end position="384"/>
    </location>
</feature>
<feature type="transmembrane region" description="Helical" evidence="1">
    <location>
        <begin position="396"/>
        <end position="416"/>
    </location>
</feature>
<feature type="transmembrane region" description="Helical" evidence="1">
    <location>
        <begin position="418"/>
        <end position="438"/>
    </location>
</feature>
<dbReference type="EMBL" id="CP000626">
    <property type="protein sequence ID" value="ABQ18390.1"/>
    <property type="molecule type" value="Genomic_DNA"/>
</dbReference>
<dbReference type="EMBL" id="CP001236">
    <property type="protein sequence ID" value="ACP11629.1"/>
    <property type="molecule type" value="Genomic_DNA"/>
</dbReference>
<dbReference type="RefSeq" id="WP_000801195.1">
    <property type="nucleotide sequence ID" value="NZ_JAACZH010000019.1"/>
</dbReference>
<dbReference type="SMR" id="A5F0D8"/>
<dbReference type="KEGG" id="vco:VC0395_0462"/>
<dbReference type="KEGG" id="vcr:VC395_A0795"/>
<dbReference type="PATRIC" id="fig|345073.21.peg.3527"/>
<dbReference type="eggNOG" id="COG3158">
    <property type="taxonomic scope" value="Bacteria"/>
</dbReference>
<dbReference type="HOGENOM" id="CLU_008142_4_2_6"/>
<dbReference type="OrthoDB" id="9805577at2"/>
<dbReference type="Proteomes" id="UP000000249">
    <property type="component" value="Chromosome 1"/>
</dbReference>
<dbReference type="GO" id="GO:0005886">
    <property type="term" value="C:plasma membrane"/>
    <property type="evidence" value="ECO:0007669"/>
    <property type="project" value="UniProtKB-SubCell"/>
</dbReference>
<dbReference type="GO" id="GO:0015079">
    <property type="term" value="F:potassium ion transmembrane transporter activity"/>
    <property type="evidence" value="ECO:0007669"/>
    <property type="project" value="UniProtKB-UniRule"/>
</dbReference>
<dbReference type="GO" id="GO:0015293">
    <property type="term" value="F:symporter activity"/>
    <property type="evidence" value="ECO:0007669"/>
    <property type="project" value="UniProtKB-UniRule"/>
</dbReference>
<dbReference type="HAMAP" id="MF_01522">
    <property type="entry name" value="Kup"/>
    <property type="match status" value="1"/>
</dbReference>
<dbReference type="InterPro" id="IPR003855">
    <property type="entry name" value="K+_transporter"/>
</dbReference>
<dbReference type="InterPro" id="IPR053952">
    <property type="entry name" value="K_trans_C"/>
</dbReference>
<dbReference type="InterPro" id="IPR053951">
    <property type="entry name" value="K_trans_N"/>
</dbReference>
<dbReference type="InterPro" id="IPR023051">
    <property type="entry name" value="Kup"/>
</dbReference>
<dbReference type="PANTHER" id="PTHR30540:SF79">
    <property type="entry name" value="LOW AFFINITY POTASSIUM TRANSPORT SYSTEM PROTEIN KUP"/>
    <property type="match status" value="1"/>
</dbReference>
<dbReference type="PANTHER" id="PTHR30540">
    <property type="entry name" value="OSMOTIC STRESS POTASSIUM TRANSPORTER"/>
    <property type="match status" value="1"/>
</dbReference>
<dbReference type="Pfam" id="PF02705">
    <property type="entry name" value="K_trans"/>
    <property type="match status" value="1"/>
</dbReference>
<dbReference type="Pfam" id="PF22776">
    <property type="entry name" value="K_trans_C"/>
    <property type="match status" value="1"/>
</dbReference>
<accession>A5F0D8</accession>
<accession>C3M666</accession>
<proteinExistence type="inferred from homology"/>
<sequence>MKPAKQTTASLAFLAMGIVYGDIGTSPLYAFKEVFFSHHPLAINPDNVLGILSLVFWAFVLIVSIKYLLLVTRADQNGEGGILTLSAIAQQNAPKPWRRIAMLLGILATGFFFGEAVITPAMSVLSAVEGIAVAQPDLAPYVLPIAMMIIVALFAVQAMGTERIGRFFAPVMLLWFLVLALLGAHAIWHAPQVLRALNPAYAVHFVLLHGQHTLFILGLVVLSVTGVEALYADMGHFGIKPIRIAWFALVMPSLLLNYFGQGAYLLTLSAPTGSTFFSLAPKAWLWPLILLATFATVIASQAVISGIFSLARQAINYGYLPPMKIAHTSEHSQGQIYVPAANMLLFVAVIFVMLRFRSSANLAAAYGIAVTAIMMISSLLLVLVARYQWQWRWPRVVTIGIAFIGMDTLLLASTSTKLMEGGWLPLLLGCVVFIVMYIWQQQRQRLLEIAGNELSVSAMIQSLEEESFQRAAGTAVYLSRSLNHVPRSLLHNIKYNKTLHERNVLMTFQYEAVPRVHPCRRAEIEQVSASFWQVVIHIGYQEEPDMAQVMHCCGLKGLYLHPNETLFLLSSERLKVQKLGMWHDLKVWFFIQMSKHALRTSERLNIPPDRLIEMGVYREM</sequence>
<protein>
    <recommendedName>
        <fullName evidence="1">Probable potassium transport system protein Kup</fullName>
    </recommendedName>
</protein>
<name>KUP_VIBC3</name>
<evidence type="ECO:0000255" key="1">
    <source>
        <dbReference type="HAMAP-Rule" id="MF_01522"/>
    </source>
</evidence>